<name>ARGR_CLOBL</name>
<organism>
    <name type="scientific">Clostridium botulinum (strain Langeland / NCTC 10281 / Type F)</name>
    <dbReference type="NCBI Taxonomy" id="441772"/>
    <lineage>
        <taxon>Bacteria</taxon>
        <taxon>Bacillati</taxon>
        <taxon>Bacillota</taxon>
        <taxon>Clostridia</taxon>
        <taxon>Eubacteriales</taxon>
        <taxon>Clostridiaceae</taxon>
        <taxon>Clostridium</taxon>
    </lineage>
</organism>
<dbReference type="EMBL" id="CP000728">
    <property type="protein sequence ID" value="ABS39706.1"/>
    <property type="molecule type" value="Genomic_DNA"/>
</dbReference>
<dbReference type="RefSeq" id="WP_004451818.1">
    <property type="nucleotide sequence ID" value="NC_009699.1"/>
</dbReference>
<dbReference type="SMR" id="A7GEJ0"/>
<dbReference type="KEGG" id="cbf:CLI_1942"/>
<dbReference type="HOGENOM" id="CLU_097103_3_0_9"/>
<dbReference type="UniPathway" id="UPA00068"/>
<dbReference type="Proteomes" id="UP000002410">
    <property type="component" value="Chromosome"/>
</dbReference>
<dbReference type="GO" id="GO:0005737">
    <property type="term" value="C:cytoplasm"/>
    <property type="evidence" value="ECO:0007669"/>
    <property type="project" value="UniProtKB-SubCell"/>
</dbReference>
<dbReference type="GO" id="GO:0034618">
    <property type="term" value="F:arginine binding"/>
    <property type="evidence" value="ECO:0007669"/>
    <property type="project" value="InterPro"/>
</dbReference>
<dbReference type="GO" id="GO:0003677">
    <property type="term" value="F:DNA binding"/>
    <property type="evidence" value="ECO:0007669"/>
    <property type="project" value="UniProtKB-KW"/>
</dbReference>
<dbReference type="GO" id="GO:0003700">
    <property type="term" value="F:DNA-binding transcription factor activity"/>
    <property type="evidence" value="ECO:0007669"/>
    <property type="project" value="UniProtKB-UniRule"/>
</dbReference>
<dbReference type="GO" id="GO:0006526">
    <property type="term" value="P:L-arginine biosynthetic process"/>
    <property type="evidence" value="ECO:0007669"/>
    <property type="project" value="UniProtKB-UniPathway"/>
</dbReference>
<dbReference type="GO" id="GO:0051259">
    <property type="term" value="P:protein complex oligomerization"/>
    <property type="evidence" value="ECO:0007669"/>
    <property type="project" value="InterPro"/>
</dbReference>
<dbReference type="GO" id="GO:1900079">
    <property type="term" value="P:regulation of arginine biosynthetic process"/>
    <property type="evidence" value="ECO:0007669"/>
    <property type="project" value="UniProtKB-UniRule"/>
</dbReference>
<dbReference type="Gene3D" id="3.30.1360.40">
    <property type="match status" value="1"/>
</dbReference>
<dbReference type="Gene3D" id="1.10.10.10">
    <property type="entry name" value="Winged helix-like DNA-binding domain superfamily/Winged helix DNA-binding domain"/>
    <property type="match status" value="1"/>
</dbReference>
<dbReference type="HAMAP" id="MF_00173">
    <property type="entry name" value="Arg_repressor"/>
    <property type="match status" value="1"/>
</dbReference>
<dbReference type="InterPro" id="IPR001669">
    <property type="entry name" value="Arg_repress"/>
</dbReference>
<dbReference type="InterPro" id="IPR020899">
    <property type="entry name" value="Arg_repress_C"/>
</dbReference>
<dbReference type="InterPro" id="IPR036251">
    <property type="entry name" value="Arg_repress_C_sf"/>
</dbReference>
<dbReference type="InterPro" id="IPR020900">
    <property type="entry name" value="Arg_repress_DNA-bd"/>
</dbReference>
<dbReference type="InterPro" id="IPR036388">
    <property type="entry name" value="WH-like_DNA-bd_sf"/>
</dbReference>
<dbReference type="InterPro" id="IPR036390">
    <property type="entry name" value="WH_DNA-bd_sf"/>
</dbReference>
<dbReference type="NCBIfam" id="TIGR01529">
    <property type="entry name" value="argR_whole"/>
    <property type="match status" value="1"/>
</dbReference>
<dbReference type="NCBIfam" id="NF001680">
    <property type="entry name" value="PRK00441.1"/>
    <property type="match status" value="1"/>
</dbReference>
<dbReference type="PANTHER" id="PTHR34471">
    <property type="entry name" value="ARGININE REPRESSOR"/>
    <property type="match status" value="1"/>
</dbReference>
<dbReference type="PANTHER" id="PTHR34471:SF1">
    <property type="entry name" value="ARGININE REPRESSOR"/>
    <property type="match status" value="1"/>
</dbReference>
<dbReference type="Pfam" id="PF01316">
    <property type="entry name" value="Arg_repressor"/>
    <property type="match status" value="1"/>
</dbReference>
<dbReference type="Pfam" id="PF02863">
    <property type="entry name" value="Arg_repressor_C"/>
    <property type="match status" value="1"/>
</dbReference>
<dbReference type="PRINTS" id="PR01467">
    <property type="entry name" value="ARGREPRESSOR"/>
</dbReference>
<dbReference type="SUPFAM" id="SSF55252">
    <property type="entry name" value="C-terminal domain of arginine repressor"/>
    <property type="match status" value="1"/>
</dbReference>
<dbReference type="SUPFAM" id="SSF46785">
    <property type="entry name" value="Winged helix' DNA-binding domain"/>
    <property type="match status" value="1"/>
</dbReference>
<keyword id="KW-0028">Amino-acid biosynthesis</keyword>
<keyword id="KW-0055">Arginine biosynthesis</keyword>
<keyword id="KW-0963">Cytoplasm</keyword>
<keyword id="KW-0238">DNA-binding</keyword>
<keyword id="KW-0678">Repressor</keyword>
<keyword id="KW-0804">Transcription</keyword>
<keyword id="KW-0805">Transcription regulation</keyword>
<feature type="chain" id="PRO_1000023557" description="Arginine repressor">
    <location>
        <begin position="1"/>
        <end position="150"/>
    </location>
</feature>
<gene>
    <name evidence="1" type="primary">argR</name>
    <name type="ordered locus">CLI_1942</name>
</gene>
<comment type="function">
    <text evidence="1">Regulates arginine biosynthesis genes.</text>
</comment>
<comment type="pathway">
    <text>Amino-acid biosynthesis; L-arginine biosynthesis [regulation].</text>
</comment>
<comment type="subcellular location">
    <subcellularLocation>
        <location evidence="1">Cytoplasm</location>
    </subcellularLocation>
</comment>
<comment type="similarity">
    <text evidence="1">Belongs to the ArgR family.</text>
</comment>
<proteinExistence type="inferred from homology"/>
<sequence length="150" mass="16484">MKVSRHAKILEIINSKDIDTQEELAEELKKMGMNVTQATVSRDIKELKLIKVLGNTGKYKYATINHTESYMSDKLINIFAQTVINVENIDKLIIIKTISGSAPAAAEAIDTLGFDGVAGTIAGDNTIFVMARTNEKAQEITMKLKKIITA</sequence>
<accession>A7GEJ0</accession>
<protein>
    <recommendedName>
        <fullName evidence="1">Arginine repressor</fullName>
    </recommendedName>
</protein>
<evidence type="ECO:0000255" key="1">
    <source>
        <dbReference type="HAMAP-Rule" id="MF_00173"/>
    </source>
</evidence>
<reference key="1">
    <citation type="submission" date="2007-06" db="EMBL/GenBank/DDBJ databases">
        <authorList>
            <person name="Brinkac L.M."/>
            <person name="Daugherty S."/>
            <person name="Dodson R.J."/>
            <person name="Madupu R."/>
            <person name="Brown J.L."/>
            <person name="Bruce D."/>
            <person name="Detter C."/>
            <person name="Munk C."/>
            <person name="Smith L.A."/>
            <person name="Smith T.J."/>
            <person name="White O."/>
            <person name="Brettin T.S."/>
        </authorList>
    </citation>
    <scope>NUCLEOTIDE SEQUENCE [LARGE SCALE GENOMIC DNA]</scope>
    <source>
        <strain>Langeland / NCTC 10281 / Type F</strain>
    </source>
</reference>